<organism>
    <name type="scientific">Staphylococcus aureus (strain Mu3 / ATCC 700698)</name>
    <dbReference type="NCBI Taxonomy" id="418127"/>
    <lineage>
        <taxon>Bacteria</taxon>
        <taxon>Bacillati</taxon>
        <taxon>Bacillota</taxon>
        <taxon>Bacilli</taxon>
        <taxon>Bacillales</taxon>
        <taxon>Staphylococcaceae</taxon>
        <taxon>Staphylococcus</taxon>
    </lineage>
</organism>
<gene>
    <name evidence="1" type="primary">rplN</name>
    <name type="ordered locus">SAHV_2224</name>
</gene>
<reference key="1">
    <citation type="journal article" date="2008" name="Antimicrob. Agents Chemother.">
        <title>Mutated response regulator graR is responsible for phenotypic conversion of Staphylococcus aureus from heterogeneous vancomycin-intermediate resistance to vancomycin-intermediate resistance.</title>
        <authorList>
            <person name="Neoh H.-M."/>
            <person name="Cui L."/>
            <person name="Yuzawa H."/>
            <person name="Takeuchi F."/>
            <person name="Matsuo M."/>
            <person name="Hiramatsu K."/>
        </authorList>
    </citation>
    <scope>NUCLEOTIDE SEQUENCE [LARGE SCALE GENOMIC DNA]</scope>
    <source>
        <strain>Mu3 / ATCC 700698</strain>
    </source>
</reference>
<name>RL14_STAA1</name>
<sequence length="122" mass="13135">MIQQETRLKVADNSGAREVLTIKVLGGSGRKTANIGDVIVCTVKNATPGGVVKKGDVVKAVIVRTKSGVRRNDGSYIKFDENACVIIRDDKGPRGTRIFGPVARELREGNFMKIVSLAPEVL</sequence>
<protein>
    <recommendedName>
        <fullName evidence="1">Large ribosomal subunit protein uL14</fullName>
    </recommendedName>
    <alternativeName>
        <fullName evidence="2">50S ribosomal protein L14</fullName>
    </alternativeName>
</protein>
<comment type="function">
    <text evidence="1">Binds to 23S rRNA. Forms part of two intersubunit bridges in the 70S ribosome.</text>
</comment>
<comment type="subunit">
    <text evidence="1">Part of the 50S ribosomal subunit. Forms a cluster with proteins L3 and L19. In the 70S ribosome, L14 and L19 interact and together make contacts with the 16S rRNA in bridges B5 and B8.</text>
</comment>
<comment type="similarity">
    <text evidence="1">Belongs to the universal ribosomal protein uL14 family.</text>
</comment>
<keyword id="KW-0687">Ribonucleoprotein</keyword>
<keyword id="KW-0689">Ribosomal protein</keyword>
<keyword id="KW-0694">RNA-binding</keyword>
<keyword id="KW-0699">rRNA-binding</keyword>
<evidence type="ECO:0000255" key="1">
    <source>
        <dbReference type="HAMAP-Rule" id="MF_01367"/>
    </source>
</evidence>
<evidence type="ECO:0000305" key="2"/>
<feature type="chain" id="PRO_1000055705" description="Large ribosomal subunit protein uL14">
    <location>
        <begin position="1"/>
        <end position="122"/>
    </location>
</feature>
<proteinExistence type="inferred from homology"/>
<dbReference type="EMBL" id="AP009324">
    <property type="protein sequence ID" value="BAF79107.1"/>
    <property type="molecule type" value="Genomic_DNA"/>
</dbReference>
<dbReference type="RefSeq" id="WP_000615921.1">
    <property type="nucleotide sequence ID" value="NZ_CTYB01000025.1"/>
</dbReference>
<dbReference type="SMR" id="A7X5E9"/>
<dbReference type="GeneID" id="98346552"/>
<dbReference type="KEGG" id="saw:SAHV_2224"/>
<dbReference type="HOGENOM" id="CLU_095071_2_1_9"/>
<dbReference type="GO" id="GO:0022625">
    <property type="term" value="C:cytosolic large ribosomal subunit"/>
    <property type="evidence" value="ECO:0007669"/>
    <property type="project" value="TreeGrafter"/>
</dbReference>
<dbReference type="GO" id="GO:0070180">
    <property type="term" value="F:large ribosomal subunit rRNA binding"/>
    <property type="evidence" value="ECO:0007669"/>
    <property type="project" value="TreeGrafter"/>
</dbReference>
<dbReference type="GO" id="GO:0003735">
    <property type="term" value="F:structural constituent of ribosome"/>
    <property type="evidence" value="ECO:0007669"/>
    <property type="project" value="InterPro"/>
</dbReference>
<dbReference type="GO" id="GO:0006412">
    <property type="term" value="P:translation"/>
    <property type="evidence" value="ECO:0007669"/>
    <property type="project" value="UniProtKB-UniRule"/>
</dbReference>
<dbReference type="CDD" id="cd00337">
    <property type="entry name" value="Ribosomal_uL14"/>
    <property type="match status" value="1"/>
</dbReference>
<dbReference type="FunFam" id="2.40.150.20:FF:000001">
    <property type="entry name" value="50S ribosomal protein L14"/>
    <property type="match status" value="1"/>
</dbReference>
<dbReference type="Gene3D" id="2.40.150.20">
    <property type="entry name" value="Ribosomal protein L14"/>
    <property type="match status" value="1"/>
</dbReference>
<dbReference type="HAMAP" id="MF_01367">
    <property type="entry name" value="Ribosomal_uL14"/>
    <property type="match status" value="1"/>
</dbReference>
<dbReference type="InterPro" id="IPR000218">
    <property type="entry name" value="Ribosomal_uL14"/>
</dbReference>
<dbReference type="InterPro" id="IPR005745">
    <property type="entry name" value="Ribosomal_uL14_bac-type"/>
</dbReference>
<dbReference type="InterPro" id="IPR019972">
    <property type="entry name" value="Ribosomal_uL14_CS"/>
</dbReference>
<dbReference type="InterPro" id="IPR036853">
    <property type="entry name" value="Ribosomal_uL14_sf"/>
</dbReference>
<dbReference type="NCBIfam" id="TIGR01067">
    <property type="entry name" value="rplN_bact"/>
    <property type="match status" value="1"/>
</dbReference>
<dbReference type="PANTHER" id="PTHR11761">
    <property type="entry name" value="50S/60S RIBOSOMAL PROTEIN L14/L23"/>
    <property type="match status" value="1"/>
</dbReference>
<dbReference type="PANTHER" id="PTHR11761:SF3">
    <property type="entry name" value="LARGE RIBOSOMAL SUBUNIT PROTEIN UL14M"/>
    <property type="match status" value="1"/>
</dbReference>
<dbReference type="Pfam" id="PF00238">
    <property type="entry name" value="Ribosomal_L14"/>
    <property type="match status" value="1"/>
</dbReference>
<dbReference type="SMART" id="SM01374">
    <property type="entry name" value="Ribosomal_L14"/>
    <property type="match status" value="1"/>
</dbReference>
<dbReference type="SUPFAM" id="SSF50193">
    <property type="entry name" value="Ribosomal protein L14"/>
    <property type="match status" value="1"/>
</dbReference>
<dbReference type="PROSITE" id="PS00049">
    <property type="entry name" value="RIBOSOMAL_L14"/>
    <property type="match status" value="1"/>
</dbReference>
<accession>A7X5E9</accession>